<proteinExistence type="inferred from homology"/>
<organism>
    <name type="scientific">Fagopyrum esculentum subsp. ancestrale</name>
    <name type="common">Wild buckwheat</name>
    <dbReference type="NCBI Taxonomy" id="180217"/>
    <lineage>
        <taxon>Eukaryota</taxon>
        <taxon>Viridiplantae</taxon>
        <taxon>Streptophyta</taxon>
        <taxon>Embryophyta</taxon>
        <taxon>Tracheophyta</taxon>
        <taxon>Spermatophyta</taxon>
        <taxon>Magnoliopsida</taxon>
        <taxon>eudicotyledons</taxon>
        <taxon>Gunneridae</taxon>
        <taxon>Pentapetalae</taxon>
        <taxon>Caryophyllales</taxon>
        <taxon>Polygonaceae</taxon>
        <taxon>Polygonoideae</taxon>
        <taxon>Fagopyreae</taxon>
        <taxon>Fagopyrum</taxon>
    </lineage>
</organism>
<accession>B2XWK8</accession>
<gene>
    <name evidence="1" type="primary">ndhK</name>
</gene>
<protein>
    <recommendedName>
        <fullName evidence="1">NAD(P)H-quinone oxidoreductase subunit K, chloroplastic</fullName>
        <ecNumber evidence="1">7.1.1.-</ecNumber>
    </recommendedName>
    <alternativeName>
        <fullName evidence="1">NAD(P)H dehydrogenase subunit K</fullName>
    </alternativeName>
    <alternativeName>
        <fullName evidence="1">NADH-plastoquinone oxidoreductase subunit K</fullName>
    </alternativeName>
</protein>
<comment type="function">
    <text evidence="1">NDH shuttles electrons from NAD(P)H:plastoquinone, via FMN and iron-sulfur (Fe-S) centers, to quinones in the photosynthetic chain and possibly in a chloroplast respiratory chain. The immediate electron acceptor for the enzyme in this species is believed to be plastoquinone. Couples the redox reaction to proton translocation, and thus conserves the redox energy in a proton gradient.</text>
</comment>
<comment type="catalytic activity">
    <reaction evidence="1">
        <text>a plastoquinone + NADH + (n+1) H(+)(in) = a plastoquinol + NAD(+) + n H(+)(out)</text>
        <dbReference type="Rhea" id="RHEA:42608"/>
        <dbReference type="Rhea" id="RHEA-COMP:9561"/>
        <dbReference type="Rhea" id="RHEA-COMP:9562"/>
        <dbReference type="ChEBI" id="CHEBI:15378"/>
        <dbReference type="ChEBI" id="CHEBI:17757"/>
        <dbReference type="ChEBI" id="CHEBI:57540"/>
        <dbReference type="ChEBI" id="CHEBI:57945"/>
        <dbReference type="ChEBI" id="CHEBI:62192"/>
    </reaction>
</comment>
<comment type="catalytic activity">
    <reaction evidence="1">
        <text>a plastoquinone + NADPH + (n+1) H(+)(in) = a plastoquinol + NADP(+) + n H(+)(out)</text>
        <dbReference type="Rhea" id="RHEA:42612"/>
        <dbReference type="Rhea" id="RHEA-COMP:9561"/>
        <dbReference type="Rhea" id="RHEA-COMP:9562"/>
        <dbReference type="ChEBI" id="CHEBI:15378"/>
        <dbReference type="ChEBI" id="CHEBI:17757"/>
        <dbReference type="ChEBI" id="CHEBI:57783"/>
        <dbReference type="ChEBI" id="CHEBI:58349"/>
        <dbReference type="ChEBI" id="CHEBI:62192"/>
    </reaction>
</comment>
<comment type="cofactor">
    <cofactor evidence="1">
        <name>[4Fe-4S] cluster</name>
        <dbReference type="ChEBI" id="CHEBI:49883"/>
    </cofactor>
    <text evidence="1">Binds 1 [4Fe-4S] cluster.</text>
</comment>
<comment type="subunit">
    <text evidence="1">NDH is composed of at least 16 different subunits, 5 of which are encoded in the nucleus.</text>
</comment>
<comment type="subcellular location">
    <subcellularLocation>
        <location evidence="1">Plastid</location>
        <location evidence="1">Chloroplast thylakoid membrane</location>
        <topology evidence="1">Peripheral membrane protein</topology>
        <orientation evidence="1">Stromal side</orientation>
    </subcellularLocation>
</comment>
<comment type="similarity">
    <text evidence="1">Belongs to the complex I 20 kDa subunit family.</text>
</comment>
<comment type="sequence caution" evidence="2">
    <conflict type="erroneous initiation">
        <sequence resource="EMBL-CDS" id="ABY79736"/>
    </conflict>
</comment>
<evidence type="ECO:0000255" key="1">
    <source>
        <dbReference type="HAMAP-Rule" id="MF_01356"/>
    </source>
</evidence>
<evidence type="ECO:0000305" key="2"/>
<sequence length="225" mass="25521">MNSVEFLPLDRITPNSVISTTSNDLSNWSRLSSLWPLLYGTSCCFIEFASLIGSRFDFDRYGLVPRSSPRQADLILTAGTVTMKMAPSLVRLYEQMPEPKYVIAMGACTITGGMFSTDSYSTVRGVDKLIPVDVYLPGCPPKPEAVIDAITKLRKKISWEIYEDRIQSQRKNRYFTIKHKFRVGRRIHTGNYNQGLLSKSPSISEIPPEKFFKYRSSVSSHEFVN</sequence>
<keyword id="KW-0004">4Fe-4S</keyword>
<keyword id="KW-0150">Chloroplast</keyword>
<keyword id="KW-0408">Iron</keyword>
<keyword id="KW-0411">Iron-sulfur</keyword>
<keyword id="KW-0472">Membrane</keyword>
<keyword id="KW-0479">Metal-binding</keyword>
<keyword id="KW-0520">NAD</keyword>
<keyword id="KW-0521">NADP</keyword>
<keyword id="KW-0934">Plastid</keyword>
<keyword id="KW-0618">Plastoquinone</keyword>
<keyword id="KW-0874">Quinone</keyword>
<keyword id="KW-0793">Thylakoid</keyword>
<keyword id="KW-1278">Translocase</keyword>
<keyword id="KW-0813">Transport</keyword>
<name>NDHK_FAGEA</name>
<geneLocation type="chloroplast"/>
<dbReference type="EC" id="7.1.1.-" evidence="1"/>
<dbReference type="EMBL" id="EU254477">
    <property type="protein sequence ID" value="ABY79736.1"/>
    <property type="status" value="ALT_INIT"/>
    <property type="molecule type" value="Genomic_DNA"/>
</dbReference>
<dbReference type="RefSeq" id="YP_001936521.1">
    <property type="nucleotide sequence ID" value="NC_010776.1"/>
</dbReference>
<dbReference type="SMR" id="B2XWK8"/>
<dbReference type="GeneID" id="6336063"/>
<dbReference type="GO" id="GO:0009535">
    <property type="term" value="C:chloroplast thylakoid membrane"/>
    <property type="evidence" value="ECO:0007669"/>
    <property type="project" value="UniProtKB-SubCell"/>
</dbReference>
<dbReference type="GO" id="GO:0045271">
    <property type="term" value="C:respiratory chain complex I"/>
    <property type="evidence" value="ECO:0007669"/>
    <property type="project" value="TreeGrafter"/>
</dbReference>
<dbReference type="GO" id="GO:0051539">
    <property type="term" value="F:4 iron, 4 sulfur cluster binding"/>
    <property type="evidence" value="ECO:0007669"/>
    <property type="project" value="UniProtKB-KW"/>
</dbReference>
<dbReference type="GO" id="GO:0005506">
    <property type="term" value="F:iron ion binding"/>
    <property type="evidence" value="ECO:0007669"/>
    <property type="project" value="UniProtKB-UniRule"/>
</dbReference>
<dbReference type="GO" id="GO:0008137">
    <property type="term" value="F:NADH dehydrogenase (ubiquinone) activity"/>
    <property type="evidence" value="ECO:0007669"/>
    <property type="project" value="InterPro"/>
</dbReference>
<dbReference type="GO" id="GO:0048038">
    <property type="term" value="F:quinone binding"/>
    <property type="evidence" value="ECO:0007669"/>
    <property type="project" value="UniProtKB-KW"/>
</dbReference>
<dbReference type="GO" id="GO:0009060">
    <property type="term" value="P:aerobic respiration"/>
    <property type="evidence" value="ECO:0007669"/>
    <property type="project" value="TreeGrafter"/>
</dbReference>
<dbReference type="GO" id="GO:0015990">
    <property type="term" value="P:electron transport coupled proton transport"/>
    <property type="evidence" value="ECO:0007669"/>
    <property type="project" value="TreeGrafter"/>
</dbReference>
<dbReference type="GO" id="GO:0019684">
    <property type="term" value="P:photosynthesis, light reaction"/>
    <property type="evidence" value="ECO:0007669"/>
    <property type="project" value="UniProtKB-UniRule"/>
</dbReference>
<dbReference type="FunFam" id="3.40.50.12280:FF:000003">
    <property type="entry name" value="NAD(P)H-quinone oxidoreductase subunit K, chloroplastic"/>
    <property type="match status" value="1"/>
</dbReference>
<dbReference type="Gene3D" id="3.40.50.12280">
    <property type="match status" value="1"/>
</dbReference>
<dbReference type="HAMAP" id="MF_01356">
    <property type="entry name" value="NDH1_NuoB"/>
    <property type="match status" value="1"/>
</dbReference>
<dbReference type="InterPro" id="IPR006137">
    <property type="entry name" value="NADH_UbQ_OxRdtase-like_20kDa"/>
</dbReference>
<dbReference type="InterPro" id="IPR006138">
    <property type="entry name" value="NADH_UQ_OxRdtase_20Kd_su"/>
</dbReference>
<dbReference type="NCBIfam" id="TIGR01957">
    <property type="entry name" value="nuoB_fam"/>
    <property type="match status" value="1"/>
</dbReference>
<dbReference type="NCBIfam" id="NF005012">
    <property type="entry name" value="PRK06411.1"/>
    <property type="match status" value="1"/>
</dbReference>
<dbReference type="PANTHER" id="PTHR11995">
    <property type="entry name" value="NADH DEHYDROGENASE"/>
    <property type="match status" value="1"/>
</dbReference>
<dbReference type="PANTHER" id="PTHR11995:SF14">
    <property type="entry name" value="NADH DEHYDROGENASE [UBIQUINONE] IRON-SULFUR PROTEIN 7, MITOCHONDRIAL"/>
    <property type="match status" value="1"/>
</dbReference>
<dbReference type="Pfam" id="PF01058">
    <property type="entry name" value="Oxidored_q6"/>
    <property type="match status" value="1"/>
</dbReference>
<dbReference type="SUPFAM" id="SSF56770">
    <property type="entry name" value="HydA/Nqo6-like"/>
    <property type="match status" value="1"/>
</dbReference>
<dbReference type="PROSITE" id="PS01150">
    <property type="entry name" value="COMPLEX1_20K"/>
    <property type="match status" value="1"/>
</dbReference>
<reference key="1">
    <citation type="journal article" date="2008" name="BMC Plant Biol.">
        <title>Comparative chloroplast genomics and phylogenetics of Fagopyrum esculentum ssp. ancestrale - a wild ancestor of cultivated buckwheat.</title>
        <authorList>
            <person name="Logacheva M.D."/>
            <person name="Samigullin T.H."/>
            <person name="Dhingra A."/>
            <person name="Penin A.A."/>
        </authorList>
    </citation>
    <scope>NUCLEOTIDE SEQUENCE [LARGE SCALE GENOMIC DNA]</scope>
</reference>
<feature type="chain" id="PRO_0000358544" description="NAD(P)H-quinone oxidoreductase subunit K, chloroplastic">
    <location>
        <begin position="1"/>
        <end position="225"/>
    </location>
</feature>
<feature type="binding site" evidence="1">
    <location>
        <position position="43"/>
    </location>
    <ligand>
        <name>[4Fe-4S] cluster</name>
        <dbReference type="ChEBI" id="CHEBI:49883"/>
    </ligand>
</feature>
<feature type="binding site" evidence="1">
    <location>
        <position position="44"/>
    </location>
    <ligand>
        <name>[4Fe-4S] cluster</name>
        <dbReference type="ChEBI" id="CHEBI:49883"/>
    </ligand>
</feature>
<feature type="binding site" evidence="1">
    <location>
        <position position="108"/>
    </location>
    <ligand>
        <name>[4Fe-4S] cluster</name>
        <dbReference type="ChEBI" id="CHEBI:49883"/>
    </ligand>
</feature>
<feature type="binding site" evidence="1">
    <location>
        <position position="139"/>
    </location>
    <ligand>
        <name>[4Fe-4S] cluster</name>
        <dbReference type="ChEBI" id="CHEBI:49883"/>
    </ligand>
</feature>